<organism>
    <name type="scientific">Homo sapiens</name>
    <name type="common">Human</name>
    <dbReference type="NCBI Taxonomy" id="9606"/>
    <lineage>
        <taxon>Eukaryota</taxon>
        <taxon>Metazoa</taxon>
        <taxon>Chordata</taxon>
        <taxon>Craniata</taxon>
        <taxon>Vertebrata</taxon>
        <taxon>Euteleostomi</taxon>
        <taxon>Mammalia</taxon>
        <taxon>Eutheria</taxon>
        <taxon>Euarchontoglires</taxon>
        <taxon>Primates</taxon>
        <taxon>Haplorrhini</taxon>
        <taxon>Catarrhini</taxon>
        <taxon>Hominidae</taxon>
        <taxon>Homo</taxon>
    </lineage>
</organism>
<proteinExistence type="evidence at protein level"/>
<name>DBND2_HUMAN</name>
<sequence>MGAGNFLTALEVPVAALAGAASDRRASCERVSPPPPLPHFRLPPLPRSRLPGPVSRPEPGAPLLGCWLQWGAPSPGPLCLLFRLCSCTCFAPLPAGADMDPNPRAALERQQLRLRERQKFFEDILQPETEFVFPLSHLHLESQRPPIGSISSMEVNVDTLEQVELIDLGDPDAADVFLPCEDPPPTPQSSGMDNHLEELSLPVPTSDRTTSRTSSSSSSDSSTNLHSPNPSDDGADTPLAQSDEEEERGDGGAEPGACS</sequence>
<accession>Q9BQY9</accession>
<accession>Q331S6</accession>
<accession>Q5QPV4</accession>
<accession>Q5QPV6</accession>
<accession>Q9BQZ0</accession>
<accession>Q9BVL1</accession>
<accession>Q9H1F6</accession>
<accession>Q9NWZ0</accession>
<accession>Q9NY07</accession>
<accession>Q9NZ31</accession>
<comment type="function">
    <text evidence="3">May modulate the activity of casein kinase-1. Inhibits CSNK1D autophosphorylation (in vitro).</text>
</comment>
<comment type="subunit">
    <text evidence="3">Monomer. Interacts with CSNK1D and CSNK1E.</text>
</comment>
<comment type="alternative products">
    <event type="alternative splicing"/>
    <isoform>
        <id>Q9BQY9-1</id>
        <name>1</name>
        <sequence type="displayed"/>
    </isoform>
    <isoform>
        <id>Q9BQY9-2</id>
        <name>2</name>
        <sequence type="described" ref="VSP_007753"/>
    </isoform>
    <isoform>
        <id>Q9BQY9-3</id>
        <name>3</name>
        <sequence type="described" ref="VSP_007753 VSP_040767 VSP_040768"/>
    </isoform>
    <isoform>
        <id>Q9BQY9-4</id>
        <name>4</name>
        <sequence type="described" ref="VSP_046691"/>
    </isoform>
</comment>
<comment type="tissue specificity">
    <text evidence="3">Detected in brain.</text>
</comment>
<comment type="similarity">
    <text evidence="7">Belongs to the dysbindin family.</text>
</comment>
<reference key="1">
    <citation type="journal article" date="2000" name="Proc. Natl. Acad. Sci. U.S.A.">
        <title>Gene expression profiling in the human hypothalamus-pituitary-adrenal axis and full-length cDNA cloning.</title>
        <authorList>
            <person name="Hu R.-M."/>
            <person name="Han Z.-G."/>
            <person name="Song H.-D."/>
            <person name="Peng Y.-D."/>
            <person name="Huang Q.-H."/>
            <person name="Ren S.-X."/>
            <person name="Gu Y.-J."/>
            <person name="Huang C.-H."/>
            <person name="Li Y.-B."/>
            <person name="Jiang C.-L."/>
            <person name="Fu G."/>
            <person name="Zhang Q.-H."/>
            <person name="Gu B.-W."/>
            <person name="Dai M."/>
            <person name="Mao Y.-F."/>
            <person name="Gao G.-F."/>
            <person name="Rong R."/>
            <person name="Ye M."/>
            <person name="Zhou J."/>
            <person name="Xu S.-H."/>
            <person name="Gu J."/>
            <person name="Shi J.-X."/>
            <person name="Jin W.-R."/>
            <person name="Zhang C.-K."/>
            <person name="Wu T.-M."/>
            <person name="Huang G.-Y."/>
            <person name="Chen Z."/>
            <person name="Chen M.-D."/>
            <person name="Chen J.-L."/>
        </authorList>
    </citation>
    <scope>NUCLEOTIDE SEQUENCE [LARGE SCALE MRNA] (ISOFORM 1)</scope>
    <source>
        <tissue>Hypothalamus</tissue>
    </source>
</reference>
<reference key="2">
    <citation type="journal article" date="2005" name="Stem Cells Dev.">
        <title>The human orthologue of a novel apoptosis response gene induced during rat myelomonocytic stem cell apoptosis maps to 20q13.12.</title>
        <authorList>
            <person name="Lucas T."/>
            <person name="Pratscher B."/>
            <person name="Fink D."/>
            <person name="Wolschek M."/>
            <person name="Samorapoompichit P."/>
            <person name="Schofer C."/>
            <person name="Pehamberger H."/>
            <person name="Muller M."/>
            <person name="Sorensen P."/>
            <person name="Jansen B."/>
        </authorList>
    </citation>
    <scope>NUCLEOTIDE SEQUENCE (ISOFORM 2)</scope>
</reference>
<reference key="3">
    <citation type="journal article" date="2004" name="Nat. Genet.">
        <title>Complete sequencing and characterization of 21,243 full-length human cDNAs.</title>
        <authorList>
            <person name="Ota T."/>
            <person name="Suzuki Y."/>
            <person name="Nishikawa T."/>
            <person name="Otsuki T."/>
            <person name="Sugiyama T."/>
            <person name="Irie R."/>
            <person name="Wakamatsu A."/>
            <person name="Hayashi K."/>
            <person name="Sato H."/>
            <person name="Nagai K."/>
            <person name="Kimura K."/>
            <person name="Makita H."/>
            <person name="Sekine M."/>
            <person name="Obayashi M."/>
            <person name="Nishi T."/>
            <person name="Shibahara T."/>
            <person name="Tanaka T."/>
            <person name="Ishii S."/>
            <person name="Yamamoto J."/>
            <person name="Saito K."/>
            <person name="Kawai Y."/>
            <person name="Isono Y."/>
            <person name="Nakamura Y."/>
            <person name="Nagahari K."/>
            <person name="Murakami K."/>
            <person name="Yasuda T."/>
            <person name="Iwayanagi T."/>
            <person name="Wagatsuma M."/>
            <person name="Shiratori A."/>
            <person name="Sudo H."/>
            <person name="Hosoiri T."/>
            <person name="Kaku Y."/>
            <person name="Kodaira H."/>
            <person name="Kondo H."/>
            <person name="Sugawara M."/>
            <person name="Takahashi M."/>
            <person name="Kanda K."/>
            <person name="Yokoi T."/>
            <person name="Furuya T."/>
            <person name="Kikkawa E."/>
            <person name="Omura Y."/>
            <person name="Abe K."/>
            <person name="Kamihara K."/>
            <person name="Katsuta N."/>
            <person name="Sato K."/>
            <person name="Tanikawa M."/>
            <person name="Yamazaki M."/>
            <person name="Ninomiya K."/>
            <person name="Ishibashi T."/>
            <person name="Yamashita H."/>
            <person name="Murakawa K."/>
            <person name="Fujimori K."/>
            <person name="Tanai H."/>
            <person name="Kimata M."/>
            <person name="Watanabe M."/>
            <person name="Hiraoka S."/>
            <person name="Chiba Y."/>
            <person name="Ishida S."/>
            <person name="Ono Y."/>
            <person name="Takiguchi S."/>
            <person name="Watanabe S."/>
            <person name="Yosida M."/>
            <person name="Hotuta T."/>
            <person name="Kusano J."/>
            <person name="Kanehori K."/>
            <person name="Takahashi-Fujii A."/>
            <person name="Hara H."/>
            <person name="Tanase T.-O."/>
            <person name="Nomura Y."/>
            <person name="Togiya S."/>
            <person name="Komai F."/>
            <person name="Hara R."/>
            <person name="Takeuchi K."/>
            <person name="Arita M."/>
            <person name="Imose N."/>
            <person name="Musashino K."/>
            <person name="Yuuki H."/>
            <person name="Oshima A."/>
            <person name="Sasaki N."/>
            <person name="Aotsuka S."/>
            <person name="Yoshikawa Y."/>
            <person name="Matsunawa H."/>
            <person name="Ichihara T."/>
            <person name="Shiohata N."/>
            <person name="Sano S."/>
            <person name="Moriya S."/>
            <person name="Momiyama H."/>
            <person name="Satoh N."/>
            <person name="Takami S."/>
            <person name="Terashima Y."/>
            <person name="Suzuki O."/>
            <person name="Nakagawa S."/>
            <person name="Senoh A."/>
            <person name="Mizoguchi H."/>
            <person name="Goto Y."/>
            <person name="Shimizu F."/>
            <person name="Wakebe H."/>
            <person name="Hishigaki H."/>
            <person name="Watanabe T."/>
            <person name="Sugiyama A."/>
            <person name="Takemoto M."/>
            <person name="Kawakami B."/>
            <person name="Yamazaki M."/>
            <person name="Watanabe K."/>
            <person name="Kumagai A."/>
            <person name="Itakura S."/>
            <person name="Fukuzumi Y."/>
            <person name="Fujimori Y."/>
            <person name="Komiyama M."/>
            <person name="Tashiro H."/>
            <person name="Tanigami A."/>
            <person name="Fujiwara T."/>
            <person name="Ono T."/>
            <person name="Yamada K."/>
            <person name="Fujii Y."/>
            <person name="Ozaki K."/>
            <person name="Hirao M."/>
            <person name="Ohmori Y."/>
            <person name="Kawabata A."/>
            <person name="Hikiji T."/>
            <person name="Kobatake N."/>
            <person name="Inagaki H."/>
            <person name="Ikema Y."/>
            <person name="Okamoto S."/>
            <person name="Okitani R."/>
            <person name="Kawakami T."/>
            <person name="Noguchi S."/>
            <person name="Itoh T."/>
            <person name="Shigeta K."/>
            <person name="Senba T."/>
            <person name="Matsumura K."/>
            <person name="Nakajima Y."/>
            <person name="Mizuno T."/>
            <person name="Morinaga M."/>
            <person name="Sasaki M."/>
            <person name="Togashi T."/>
            <person name="Oyama M."/>
            <person name="Hata H."/>
            <person name="Watanabe M."/>
            <person name="Komatsu T."/>
            <person name="Mizushima-Sugano J."/>
            <person name="Satoh T."/>
            <person name="Shirai Y."/>
            <person name="Takahashi Y."/>
            <person name="Nakagawa K."/>
            <person name="Okumura K."/>
            <person name="Nagase T."/>
            <person name="Nomura N."/>
            <person name="Kikuchi H."/>
            <person name="Masuho Y."/>
            <person name="Yamashita R."/>
            <person name="Nakai K."/>
            <person name="Yada T."/>
            <person name="Nakamura Y."/>
            <person name="Ohara O."/>
            <person name="Isogai T."/>
            <person name="Sugano S."/>
        </authorList>
    </citation>
    <scope>NUCLEOTIDE SEQUENCE [LARGE SCALE MRNA] (ISOFORMS 2 AND 3)</scope>
</reference>
<reference key="4">
    <citation type="submission" date="2000-03" db="EMBL/GenBank/DDBJ databases">
        <title>Full-length sequencing of some human and murine muscular transcripts (Telethon Italy project B41).</title>
        <authorList>
            <person name="Frigimelica E."/>
            <person name="Lanfranchi G."/>
        </authorList>
    </citation>
    <scope>NUCLEOTIDE SEQUENCE [MRNA] (ISOFORM 2)</scope>
    <source>
        <tissue>Skeletal muscle</tissue>
    </source>
</reference>
<reference key="5">
    <citation type="journal article" date="2001" name="Nature">
        <title>The DNA sequence and comparative analysis of human chromosome 20.</title>
        <authorList>
            <person name="Deloukas P."/>
            <person name="Matthews L.H."/>
            <person name="Ashurst J.L."/>
            <person name="Burton J."/>
            <person name="Gilbert J.G.R."/>
            <person name="Jones M."/>
            <person name="Stavrides G."/>
            <person name="Almeida J.P."/>
            <person name="Babbage A.K."/>
            <person name="Bagguley C.L."/>
            <person name="Bailey J."/>
            <person name="Barlow K.F."/>
            <person name="Bates K.N."/>
            <person name="Beard L.M."/>
            <person name="Beare D.M."/>
            <person name="Beasley O.P."/>
            <person name="Bird C.P."/>
            <person name="Blakey S.E."/>
            <person name="Bridgeman A.M."/>
            <person name="Brown A.J."/>
            <person name="Buck D."/>
            <person name="Burrill W.D."/>
            <person name="Butler A.P."/>
            <person name="Carder C."/>
            <person name="Carter N.P."/>
            <person name="Chapman J.C."/>
            <person name="Clamp M."/>
            <person name="Clark G."/>
            <person name="Clark L.N."/>
            <person name="Clark S.Y."/>
            <person name="Clee C.M."/>
            <person name="Clegg S."/>
            <person name="Cobley V.E."/>
            <person name="Collier R.E."/>
            <person name="Connor R.E."/>
            <person name="Corby N.R."/>
            <person name="Coulson A."/>
            <person name="Coville G.J."/>
            <person name="Deadman R."/>
            <person name="Dhami P.D."/>
            <person name="Dunn M."/>
            <person name="Ellington A.G."/>
            <person name="Frankland J.A."/>
            <person name="Fraser A."/>
            <person name="French L."/>
            <person name="Garner P."/>
            <person name="Grafham D.V."/>
            <person name="Griffiths C."/>
            <person name="Griffiths M.N.D."/>
            <person name="Gwilliam R."/>
            <person name="Hall R.E."/>
            <person name="Hammond S."/>
            <person name="Harley J.L."/>
            <person name="Heath P.D."/>
            <person name="Ho S."/>
            <person name="Holden J.L."/>
            <person name="Howden P.J."/>
            <person name="Huckle E."/>
            <person name="Hunt A.R."/>
            <person name="Hunt S.E."/>
            <person name="Jekosch K."/>
            <person name="Johnson C.M."/>
            <person name="Johnson D."/>
            <person name="Kay M.P."/>
            <person name="Kimberley A.M."/>
            <person name="King A."/>
            <person name="Knights A."/>
            <person name="Laird G.K."/>
            <person name="Lawlor S."/>
            <person name="Lehvaeslaiho M.H."/>
            <person name="Leversha M.A."/>
            <person name="Lloyd C."/>
            <person name="Lloyd D.M."/>
            <person name="Lovell J.D."/>
            <person name="Marsh V.L."/>
            <person name="Martin S.L."/>
            <person name="McConnachie L.J."/>
            <person name="McLay K."/>
            <person name="McMurray A.A."/>
            <person name="Milne S.A."/>
            <person name="Mistry D."/>
            <person name="Moore M.J.F."/>
            <person name="Mullikin J.C."/>
            <person name="Nickerson T."/>
            <person name="Oliver K."/>
            <person name="Parker A."/>
            <person name="Patel R."/>
            <person name="Pearce T.A.V."/>
            <person name="Peck A.I."/>
            <person name="Phillimore B.J.C.T."/>
            <person name="Prathalingam S.R."/>
            <person name="Plumb R.W."/>
            <person name="Ramsay H."/>
            <person name="Rice C.M."/>
            <person name="Ross M.T."/>
            <person name="Scott C.E."/>
            <person name="Sehra H.K."/>
            <person name="Shownkeen R."/>
            <person name="Sims S."/>
            <person name="Skuce C.D."/>
            <person name="Smith M.L."/>
            <person name="Soderlund C."/>
            <person name="Steward C.A."/>
            <person name="Sulston J.E."/>
            <person name="Swann R.M."/>
            <person name="Sycamore N."/>
            <person name="Taylor R."/>
            <person name="Tee L."/>
            <person name="Thomas D.W."/>
            <person name="Thorpe A."/>
            <person name="Tracey A."/>
            <person name="Tromans A.C."/>
            <person name="Vaudin M."/>
            <person name="Wall M."/>
            <person name="Wallis J.M."/>
            <person name="Whitehead S.L."/>
            <person name="Whittaker P."/>
            <person name="Willey D.L."/>
            <person name="Williams L."/>
            <person name="Williams S.A."/>
            <person name="Wilming L."/>
            <person name="Wray P.W."/>
            <person name="Hubbard T."/>
            <person name="Durbin R.M."/>
            <person name="Bentley D.R."/>
            <person name="Beck S."/>
            <person name="Rogers J."/>
        </authorList>
    </citation>
    <scope>NUCLEOTIDE SEQUENCE [LARGE SCALE GENOMIC DNA]</scope>
</reference>
<reference key="6">
    <citation type="submission" date="2005-07" db="EMBL/GenBank/DDBJ databases">
        <authorList>
            <person name="Mural R.J."/>
            <person name="Istrail S."/>
            <person name="Sutton G.G."/>
            <person name="Florea L."/>
            <person name="Halpern A.L."/>
            <person name="Mobarry C.M."/>
            <person name="Lippert R."/>
            <person name="Walenz B."/>
            <person name="Shatkay H."/>
            <person name="Dew I."/>
            <person name="Miller J.R."/>
            <person name="Flanigan M.J."/>
            <person name="Edwards N.J."/>
            <person name="Bolanos R."/>
            <person name="Fasulo D."/>
            <person name="Halldorsson B.V."/>
            <person name="Hannenhalli S."/>
            <person name="Turner R."/>
            <person name="Yooseph S."/>
            <person name="Lu F."/>
            <person name="Nusskern D.R."/>
            <person name="Shue B.C."/>
            <person name="Zheng X.H."/>
            <person name="Zhong F."/>
            <person name="Delcher A.L."/>
            <person name="Huson D.H."/>
            <person name="Kravitz S.A."/>
            <person name="Mouchard L."/>
            <person name="Reinert K."/>
            <person name="Remington K.A."/>
            <person name="Clark A.G."/>
            <person name="Waterman M.S."/>
            <person name="Eichler E.E."/>
            <person name="Adams M.D."/>
            <person name="Hunkapiller M.W."/>
            <person name="Myers E.W."/>
            <person name="Venter J.C."/>
        </authorList>
    </citation>
    <scope>NUCLEOTIDE SEQUENCE [LARGE SCALE GENOMIC DNA]</scope>
</reference>
<reference key="7">
    <citation type="journal article" date="2004" name="Genome Res.">
        <title>The status, quality, and expansion of the NIH full-length cDNA project: the Mammalian Gene Collection (MGC).</title>
        <authorList>
            <consortium name="The MGC Project Team"/>
        </authorList>
    </citation>
    <scope>NUCLEOTIDE SEQUENCE [LARGE SCALE MRNA] (ISOFORM 2)</scope>
    <source>
        <tissue>Placenta</tissue>
    </source>
</reference>
<reference key="8">
    <citation type="journal article" date="2006" name="Biochemistry">
        <title>Dysbindin structural homologue CK1BP is an isoform-selective binding partner of human casein kinase-1.</title>
        <authorList>
            <person name="Yin H."/>
            <person name="Laguna K.A."/>
            <person name="Li G."/>
            <person name="Kuret J."/>
        </authorList>
    </citation>
    <scope>FUNCTION</scope>
    <scope>SUBUNIT</scope>
    <scope>INTERACTION WITH CSNK1D AND CSNK1E</scope>
    <scope>TISSUE SPECIFICITY</scope>
</reference>
<gene>
    <name type="primary">DBNDD2</name>
    <name type="synonym">C20orf35</name>
</gene>
<keyword id="KW-0025">Alternative splicing</keyword>
<keyword id="KW-0597">Phosphoprotein</keyword>
<keyword id="KW-1267">Proteomics identification</keyword>
<keyword id="KW-1185">Reference proteome</keyword>
<feature type="chain" id="PRO_0000191003" description="Dysbindin domain-containing protein 2">
    <location>
        <begin position="1"/>
        <end position="259"/>
    </location>
</feature>
<feature type="region of interest" description="Disordered" evidence="2">
    <location>
        <begin position="27"/>
        <end position="56"/>
    </location>
</feature>
<feature type="region of interest" description="Disordered" evidence="2">
    <location>
        <begin position="174"/>
        <end position="259"/>
    </location>
</feature>
<feature type="compositionally biased region" description="Pro residues" evidence="2">
    <location>
        <begin position="32"/>
        <end position="46"/>
    </location>
</feature>
<feature type="compositionally biased region" description="Low complexity" evidence="2">
    <location>
        <begin position="205"/>
        <end position="223"/>
    </location>
</feature>
<feature type="modified residue" description="Phosphoserine" evidence="1">
    <location>
        <position position="217"/>
    </location>
</feature>
<feature type="modified residue" description="Phosphoserine" evidence="1">
    <location>
        <position position="218"/>
    </location>
</feature>
<feature type="modified residue" description="Phosphothreonine" evidence="1">
    <location>
        <position position="237"/>
    </location>
</feature>
<feature type="modified residue" description="Phosphoserine" evidence="1">
    <location>
        <position position="242"/>
    </location>
</feature>
<feature type="splice variant" id="VSP_007753" description="In isoform 2 and isoform 3." evidence="4 5 6">
    <location>
        <begin position="1"/>
        <end position="98"/>
    </location>
</feature>
<feature type="splice variant" id="VSP_046691" description="In isoform 4." evidence="7">
    <original>MGAGNFLTALEVPVAALAGAASDRRASCERVSPPPPLPHFRLPPLPRSRLPGP</original>
    <variation>MESWALAVFPEYRVSLLWCLELASPLWSLGQAPPLHETWFVGHTWFQGRGKRSPRAE</variation>
    <location>
        <begin position="1"/>
        <end position="53"/>
    </location>
</feature>
<feature type="splice variant" id="VSP_040767" description="In isoform 3." evidence="4">
    <original>DNHLEELSLPVPTSDRTT</original>
    <variation>PLCFGDFSASQPEPDVRL</variation>
    <location>
        <begin position="193"/>
        <end position="210"/>
    </location>
</feature>
<feature type="splice variant" id="VSP_040768" description="In isoform 3." evidence="4">
    <location>
        <begin position="211"/>
        <end position="259"/>
    </location>
</feature>
<feature type="sequence conflict" description="In Ref. 1; AAF67656." evidence="7" ref="1">
    <original>P</original>
    <variation>GTR</variation>
    <location>
        <position position="43"/>
    </location>
</feature>
<feature type="sequence conflict" description="In Ref. 3; BAA91235." evidence="7" ref="3">
    <original>Q</original>
    <variation>H</variation>
    <location>
        <position position="162"/>
    </location>
</feature>
<feature type="sequence conflict" description="In Ref. 1; AAF67656, 2; AAM77463, 3; BAA91235, 6; EAW75854/EAW75848 and 7; AAH12818/AAH01105." evidence="7" ref="1 2 3 6 7">
    <original>M</original>
    <variation>V</variation>
    <location>
        <position position="192"/>
    </location>
</feature>
<feature type="sequence conflict" description="In Ref. 1; AAF67656." evidence="7" ref="1">
    <original>P</original>
    <variation>A</variation>
    <location>
        <position position="204"/>
    </location>
</feature>
<feature type="sequence conflict" description="In Ref. 3; BAA91235." evidence="7" ref="3">
    <original>G</original>
    <variation>D</variation>
    <location>
        <position position="249"/>
    </location>
</feature>
<evidence type="ECO:0000250" key="1">
    <source>
        <dbReference type="UniProtKB" id="Q9CRD4"/>
    </source>
</evidence>
<evidence type="ECO:0000256" key="2">
    <source>
        <dbReference type="SAM" id="MobiDB-lite"/>
    </source>
</evidence>
<evidence type="ECO:0000269" key="3">
    <source>
    </source>
</evidence>
<evidence type="ECO:0000303" key="4">
    <source>
    </source>
</evidence>
<evidence type="ECO:0000303" key="5">
    <source>
    </source>
</evidence>
<evidence type="ECO:0000303" key="6">
    <source ref="4"/>
</evidence>
<evidence type="ECO:0000305" key="7"/>
<protein>
    <recommendedName>
        <fullName>Dysbindin domain-containing protein 2</fullName>
    </recommendedName>
    <alternativeName>
        <fullName>Casein kinase-1 binding protein</fullName>
        <shortName>CK1BP</shortName>
    </alternativeName>
    <alternativeName>
        <fullName>HSMNP1</fullName>
    </alternativeName>
</protein>
<dbReference type="EMBL" id="AF220191">
    <property type="protein sequence ID" value="AAF67656.1"/>
    <property type="molecule type" value="mRNA"/>
</dbReference>
<dbReference type="EMBL" id="AY113697">
    <property type="protein sequence ID" value="AAM77463.1"/>
    <property type="molecule type" value="mRNA"/>
</dbReference>
<dbReference type="EMBL" id="AK000531">
    <property type="protein sequence ID" value="BAA91235.1"/>
    <property type="molecule type" value="mRNA"/>
</dbReference>
<dbReference type="EMBL" id="AJ276469">
    <property type="protein sequence ID" value="CAB83042.1"/>
    <property type="molecule type" value="mRNA"/>
</dbReference>
<dbReference type="EMBL" id="AL021578">
    <property type="status" value="NOT_ANNOTATED_CDS"/>
    <property type="molecule type" value="Genomic_DNA"/>
</dbReference>
<dbReference type="EMBL" id="CH471077">
    <property type="protein sequence ID" value="EAW75848.1"/>
    <property type="molecule type" value="Genomic_DNA"/>
</dbReference>
<dbReference type="EMBL" id="CH471077">
    <property type="protein sequence ID" value="EAW75854.1"/>
    <property type="molecule type" value="Genomic_DNA"/>
</dbReference>
<dbReference type="EMBL" id="AL591565">
    <property type="protein sequence ID" value="CAC39141.1"/>
    <property type="molecule type" value="mRNA"/>
</dbReference>
<dbReference type="EMBL" id="BC001105">
    <property type="protein sequence ID" value="AAH01105.1"/>
    <property type="molecule type" value="mRNA"/>
</dbReference>
<dbReference type="EMBL" id="BC012818">
    <property type="protein sequence ID" value="AAH12818.1"/>
    <property type="molecule type" value="mRNA"/>
</dbReference>
<dbReference type="EMBL" id="BG703352">
    <property type="status" value="NOT_ANNOTATED_CDS"/>
    <property type="molecule type" value="mRNA"/>
</dbReference>
<dbReference type="CCDS" id="CCDS42880.1">
    <molecule id="Q9BQY9-2"/>
</dbReference>
<dbReference type="CCDS" id="CCDS42881.1">
    <molecule id="Q9BQY9-3"/>
</dbReference>
<dbReference type="CCDS" id="CCDS56193.1">
    <molecule id="Q9BQY9-1"/>
</dbReference>
<dbReference type="RefSeq" id="NP_001041686.1">
    <molecule id="Q9BQY9-2"/>
    <property type="nucleotide sequence ID" value="NM_001048221.3"/>
</dbReference>
<dbReference type="RefSeq" id="NP_001041687.1">
    <molecule id="Q9BQY9-3"/>
    <property type="nucleotide sequence ID" value="NM_001048222.3"/>
</dbReference>
<dbReference type="RefSeq" id="NP_001041688.1">
    <molecule id="Q9BQY9-2"/>
    <property type="nucleotide sequence ID" value="NM_001048223.3"/>
</dbReference>
<dbReference type="RefSeq" id="NP_001041689.1">
    <molecule id="Q9BQY9-3"/>
    <property type="nucleotide sequence ID" value="NM_001048224.3"/>
</dbReference>
<dbReference type="RefSeq" id="NP_001041690.3">
    <molecule id="Q9BQY9-2"/>
    <property type="nucleotide sequence ID" value="NM_001048225.4"/>
</dbReference>
<dbReference type="RefSeq" id="NP_001041691.3">
    <molecule id="Q9BQY9-3"/>
    <property type="nucleotide sequence ID" value="NM_001048226.4"/>
</dbReference>
<dbReference type="RefSeq" id="NP_001184068.1">
    <molecule id="Q9BQY9-2"/>
    <property type="nucleotide sequence ID" value="NM_001197139.2"/>
</dbReference>
<dbReference type="RefSeq" id="NP_001184069.1">
    <molecule id="Q9BQY9-2"/>
    <property type="nucleotide sequence ID" value="NM_001197140.2"/>
</dbReference>
<dbReference type="RefSeq" id="NP_060948.3">
    <molecule id="Q9BQY9-1"/>
    <property type="nucleotide sequence ID" value="NM_018478.3"/>
</dbReference>
<dbReference type="BioGRID" id="120963">
    <property type="interactions" value="11"/>
</dbReference>
<dbReference type="FunCoup" id="Q9BQY9">
    <property type="interactions" value="15"/>
</dbReference>
<dbReference type="IntAct" id="Q9BQY9">
    <property type="interactions" value="4"/>
</dbReference>
<dbReference type="MINT" id="Q9BQY9"/>
<dbReference type="STRING" id="9606.ENSP00000361795"/>
<dbReference type="GlyGen" id="Q9BQY9">
    <property type="glycosylation" value="1 site"/>
</dbReference>
<dbReference type="iPTMnet" id="Q9BQY9"/>
<dbReference type="PhosphoSitePlus" id="Q9BQY9"/>
<dbReference type="BioMuta" id="DBNDD2"/>
<dbReference type="DMDM" id="327478587"/>
<dbReference type="jPOST" id="Q9BQY9"/>
<dbReference type="MassIVE" id="Q9BQY9"/>
<dbReference type="PaxDb" id="9606-ENSP00000361795"/>
<dbReference type="PeptideAtlas" id="Q9BQY9"/>
<dbReference type="ProteomicsDB" id="63697"/>
<dbReference type="ProteomicsDB" id="78730">
    <molecule id="Q9BQY9-1"/>
</dbReference>
<dbReference type="ProteomicsDB" id="78731">
    <molecule id="Q9BQY9-2"/>
</dbReference>
<dbReference type="ProteomicsDB" id="78732">
    <molecule id="Q9BQY9-3"/>
</dbReference>
<dbReference type="Antibodypedia" id="51972">
    <property type="antibodies" value="48 antibodies from 13 providers"/>
</dbReference>
<dbReference type="DNASU" id="55861"/>
<dbReference type="Ensembl" id="ENST00000357275.6">
    <molecule id="Q9BQY9-2"/>
    <property type="protein sequence ID" value="ENSP00000349822.2"/>
    <property type="gene ID" value="ENSG00000244274.9"/>
</dbReference>
<dbReference type="Ensembl" id="ENST00000360981.8">
    <molecule id="Q9BQY9-2"/>
    <property type="protein sequence ID" value="ENSP00000354250.4"/>
    <property type="gene ID" value="ENSG00000244274.9"/>
</dbReference>
<dbReference type="Ensembl" id="ENST00000372710.5">
    <molecule id="Q9BQY9-2"/>
    <property type="protein sequence ID" value="ENSP00000361795.4"/>
    <property type="gene ID" value="ENSG00000244274.9"/>
</dbReference>
<dbReference type="Ensembl" id="ENST00000372712.6">
    <molecule id="Q9BQY9-2"/>
    <property type="protein sequence ID" value="ENSP00000361797.2"/>
    <property type="gene ID" value="ENSG00000244274.9"/>
</dbReference>
<dbReference type="Ensembl" id="ENST00000372717.5">
    <molecule id="Q9BQY9-3"/>
    <property type="protein sequence ID" value="ENSP00000361802.1"/>
    <property type="gene ID" value="ENSG00000244274.9"/>
</dbReference>
<dbReference type="Ensembl" id="ENST00000372720.7">
    <molecule id="Q9BQY9-1"/>
    <property type="protein sequence ID" value="ENSP00000361805.3"/>
    <property type="gene ID" value="ENSG00000244274.9"/>
</dbReference>
<dbReference type="Ensembl" id="ENST00000372722.7">
    <molecule id="Q9BQY9-3"/>
    <property type="protein sequence ID" value="ENSP00000361807.3"/>
    <property type="gene ID" value="ENSG00000244274.9"/>
</dbReference>
<dbReference type="Ensembl" id="ENST00000372723.7">
    <molecule id="Q9BQY9-2"/>
    <property type="protein sequence ID" value="ENSP00000361808.3"/>
    <property type="gene ID" value="ENSG00000244274.9"/>
</dbReference>
<dbReference type="GeneID" id="55861"/>
<dbReference type="KEGG" id="hsa:55861"/>
<dbReference type="MANE-Select" id="ENST00000372710.5">
    <molecule id="Q9BQY9-2"/>
    <property type="protein sequence ID" value="ENSP00000361795.4"/>
    <property type="RefSeq nucleotide sequence ID" value="NM_001048225.4"/>
    <property type="RefSeq protein sequence ID" value="NP_001041690.3"/>
</dbReference>
<dbReference type="UCSC" id="uc002xnz.4">
    <molecule id="Q9BQY9-1"/>
    <property type="organism name" value="human"/>
</dbReference>
<dbReference type="AGR" id="HGNC:15881"/>
<dbReference type="CTD" id="55861"/>
<dbReference type="GeneCards" id="DBNDD2"/>
<dbReference type="HGNC" id="HGNC:15881">
    <property type="gene designation" value="DBNDD2"/>
</dbReference>
<dbReference type="HPA" id="ENSG00000244274">
    <property type="expression patterns" value="Tissue enhanced (brain)"/>
</dbReference>
<dbReference type="MIM" id="611453">
    <property type="type" value="gene"/>
</dbReference>
<dbReference type="neXtProt" id="NX_Q9BQY9"/>
<dbReference type="OpenTargets" id="ENSG00000244274"/>
<dbReference type="PharmGKB" id="PA25749"/>
<dbReference type="VEuPathDB" id="HostDB:ENSG00000244274"/>
<dbReference type="eggNOG" id="ENOG502RZ1K">
    <property type="taxonomic scope" value="Eukaryota"/>
</dbReference>
<dbReference type="GeneTree" id="ENSGT00940000161212"/>
<dbReference type="HOGENOM" id="CLU_097594_1_0_1"/>
<dbReference type="InParanoid" id="Q9BQY9"/>
<dbReference type="OMA" id="CWLQRGS"/>
<dbReference type="OrthoDB" id="8951733at2759"/>
<dbReference type="PAN-GO" id="Q9BQY9">
    <property type="GO annotations" value="1 GO annotation based on evolutionary models"/>
</dbReference>
<dbReference type="PhylomeDB" id="Q9BQY9"/>
<dbReference type="TreeFam" id="TF332997"/>
<dbReference type="PathwayCommons" id="Q9BQY9"/>
<dbReference type="SignaLink" id="Q9BQY9"/>
<dbReference type="BioGRID-ORCS" id="55861">
    <property type="hits" value="10 hits in 1156 CRISPR screens"/>
</dbReference>
<dbReference type="GeneWiki" id="DBNDD2"/>
<dbReference type="GenomeRNAi" id="55861"/>
<dbReference type="Pharos" id="Q9BQY9">
    <property type="development level" value="Tdark"/>
</dbReference>
<dbReference type="PRO" id="PR:Q9BQY9"/>
<dbReference type="Proteomes" id="UP000005640">
    <property type="component" value="Chromosome 20"/>
</dbReference>
<dbReference type="RNAct" id="Q9BQY9">
    <property type="molecule type" value="protein"/>
</dbReference>
<dbReference type="Bgee" id="ENSG00000244274">
    <property type="expression patterns" value="Expressed in C1 segment of cervical spinal cord and 97 other cell types or tissues"/>
</dbReference>
<dbReference type="ExpressionAtlas" id="Q9BQY9">
    <property type="expression patterns" value="baseline and differential"/>
</dbReference>
<dbReference type="GO" id="GO:0005783">
    <property type="term" value="C:endoplasmic reticulum"/>
    <property type="evidence" value="ECO:0007669"/>
    <property type="project" value="Ensembl"/>
</dbReference>
<dbReference type="GO" id="GO:0005764">
    <property type="term" value="C:lysosome"/>
    <property type="evidence" value="ECO:0007669"/>
    <property type="project" value="Ensembl"/>
</dbReference>
<dbReference type="GO" id="GO:0051117">
    <property type="term" value="F:ATPase binding"/>
    <property type="evidence" value="ECO:0007669"/>
    <property type="project" value="Ensembl"/>
</dbReference>
<dbReference type="GO" id="GO:0006915">
    <property type="term" value="P:apoptotic process"/>
    <property type="evidence" value="ECO:0007669"/>
    <property type="project" value="Ensembl"/>
</dbReference>
<dbReference type="GO" id="GO:0070371">
    <property type="term" value="P:ERK1 and ERK2 cascade"/>
    <property type="evidence" value="ECO:0007669"/>
    <property type="project" value="Ensembl"/>
</dbReference>
<dbReference type="GO" id="GO:0050801">
    <property type="term" value="P:monoatomic ion homeostasis"/>
    <property type="evidence" value="ECO:0007669"/>
    <property type="project" value="Ensembl"/>
</dbReference>
<dbReference type="GO" id="GO:0006469">
    <property type="term" value="P:negative regulation of protein kinase activity"/>
    <property type="evidence" value="ECO:0000314"/>
    <property type="project" value="UniProtKB"/>
</dbReference>
<dbReference type="GO" id="GO:0031175">
    <property type="term" value="P:neuron projection development"/>
    <property type="evidence" value="ECO:0007669"/>
    <property type="project" value="Ensembl"/>
</dbReference>
<dbReference type="GO" id="GO:0009966">
    <property type="term" value="P:regulation of signal transduction"/>
    <property type="evidence" value="ECO:0000318"/>
    <property type="project" value="GO_Central"/>
</dbReference>
<dbReference type="InterPro" id="IPR007531">
    <property type="entry name" value="Dysbindin"/>
</dbReference>
<dbReference type="PANTHER" id="PTHR16294:SF7">
    <property type="entry name" value="DYSBINDIN DOMAIN-CONTAINING PROTEIN 2"/>
    <property type="match status" value="1"/>
</dbReference>
<dbReference type="PANTHER" id="PTHR16294">
    <property type="entry name" value="DYSTROBREVIN BINDING PROTEIN 1 DYSBINDIN"/>
    <property type="match status" value="1"/>
</dbReference>
<dbReference type="Pfam" id="PF04440">
    <property type="entry name" value="Dysbindin"/>
    <property type="match status" value="1"/>
</dbReference>